<accession>Q5WVQ2</accession>
<sequence length="860" mass="96390">MKSSEIRQAFLNYFVQRGHQLVASSSLIPSNDPTLLFTNAGMVQFKDLFLGLETRPYQRAVTAQRCVRAGGKHNDLENVGYTARHHTFFEMLGNFSFGDYFKREAIQYAWEFLTEVLHIPAERLWVTVYKEDLEAEGIWLKEMKVSPERFSRCGEKDNFWSMGDTGPCGPCTEIFYDHGPEVAGGPPGSPDEDGDRYIEIWNLVFMQFNRDREGCLHPLPKPSVDTGMGLERLAAVIQGVHSNYEIDSFQYLIKAIAQLGQDIDLNHTSLKVIADHIRSCSFLIVDGVLPSNEGRGYVLRRIIRRAVRHGNKLGLPSPFFFKLVQPLIDVMGDAYPELINSKAHIERILQQEENQFTRTLEQGLRLLQDHIKNLKGQELSGEVAFKLYDTYGFPIDLTADIIREQGLHIDMEAFNQLMQQQREQSQAASQFTTDYHAVSQLDHQSEFHGYEKESMEAKIIGLLQEGNEVKSLNKGAKGAVILDHTPFYAESGGQVGDKGLLIGKEFSFQVDDTQKVGQAVVHYGEVIKGELTLDLSIHAQVDHIRRDAIRLNHTATHLLHAALKQIVGQHVQQRGSLVDAERARFDFSHFEPLTPQQIQQIEEVVNAQIRANNEVITQVMDIESAKQSGAVALFGEKYSDAVRVLSMGDFSKELCGGTHARRTGDIGLFKIVAEYGIASGIRRVEMVTGRYALAWVNEQLGFMNNLAATLKTTPNSLQEKVSQLLLDNKNQEKMIAKLLSEKAQKSGADILGEIEEIKGINLLIKQLEGMDSQTMRHTMDQLKSRIDSAVIILFTIEQNKMNVIAGVSKNIIGKTPNAAQLVRHLCGKGGGRDDMAQGGGDVPEDLNSKIKEIKEMIEKN</sequence>
<dbReference type="EC" id="6.1.1.7" evidence="1"/>
<dbReference type="EMBL" id="CR628337">
    <property type="protein sequence ID" value="CAH16002.1"/>
    <property type="molecule type" value="Genomic_DNA"/>
</dbReference>
<dbReference type="RefSeq" id="WP_011215772.1">
    <property type="nucleotide sequence ID" value="NC_006369.1"/>
</dbReference>
<dbReference type="SMR" id="Q5WVQ2"/>
<dbReference type="KEGG" id="lpf:lpl1763"/>
<dbReference type="LegioList" id="lpl1763"/>
<dbReference type="HOGENOM" id="CLU_004485_1_1_6"/>
<dbReference type="Proteomes" id="UP000002517">
    <property type="component" value="Chromosome"/>
</dbReference>
<dbReference type="GO" id="GO:0005829">
    <property type="term" value="C:cytosol"/>
    <property type="evidence" value="ECO:0007669"/>
    <property type="project" value="TreeGrafter"/>
</dbReference>
<dbReference type="GO" id="GO:0004813">
    <property type="term" value="F:alanine-tRNA ligase activity"/>
    <property type="evidence" value="ECO:0007669"/>
    <property type="project" value="UniProtKB-UniRule"/>
</dbReference>
<dbReference type="GO" id="GO:0002161">
    <property type="term" value="F:aminoacyl-tRNA deacylase activity"/>
    <property type="evidence" value="ECO:0007669"/>
    <property type="project" value="TreeGrafter"/>
</dbReference>
<dbReference type="GO" id="GO:0005524">
    <property type="term" value="F:ATP binding"/>
    <property type="evidence" value="ECO:0007669"/>
    <property type="project" value="UniProtKB-UniRule"/>
</dbReference>
<dbReference type="GO" id="GO:0000049">
    <property type="term" value="F:tRNA binding"/>
    <property type="evidence" value="ECO:0007669"/>
    <property type="project" value="UniProtKB-KW"/>
</dbReference>
<dbReference type="GO" id="GO:0008270">
    <property type="term" value="F:zinc ion binding"/>
    <property type="evidence" value="ECO:0007669"/>
    <property type="project" value="UniProtKB-UniRule"/>
</dbReference>
<dbReference type="GO" id="GO:0006419">
    <property type="term" value="P:alanyl-tRNA aminoacylation"/>
    <property type="evidence" value="ECO:0007669"/>
    <property type="project" value="UniProtKB-UniRule"/>
</dbReference>
<dbReference type="GO" id="GO:0045892">
    <property type="term" value="P:negative regulation of DNA-templated transcription"/>
    <property type="evidence" value="ECO:0007669"/>
    <property type="project" value="TreeGrafter"/>
</dbReference>
<dbReference type="CDD" id="cd00673">
    <property type="entry name" value="AlaRS_core"/>
    <property type="match status" value="1"/>
</dbReference>
<dbReference type="FunFam" id="2.40.30.130:FF:000001">
    <property type="entry name" value="Alanine--tRNA ligase"/>
    <property type="match status" value="1"/>
</dbReference>
<dbReference type="FunFam" id="3.10.310.40:FF:000001">
    <property type="entry name" value="Alanine--tRNA ligase"/>
    <property type="match status" value="1"/>
</dbReference>
<dbReference type="FunFam" id="3.30.54.20:FF:000001">
    <property type="entry name" value="Alanine--tRNA ligase"/>
    <property type="match status" value="1"/>
</dbReference>
<dbReference type="FunFam" id="3.30.930.10:FF:000004">
    <property type="entry name" value="Alanine--tRNA ligase"/>
    <property type="match status" value="1"/>
</dbReference>
<dbReference type="FunFam" id="3.30.980.10:FF:000004">
    <property type="entry name" value="Alanine--tRNA ligase, cytoplasmic"/>
    <property type="match status" value="1"/>
</dbReference>
<dbReference type="Gene3D" id="2.40.30.130">
    <property type="match status" value="1"/>
</dbReference>
<dbReference type="Gene3D" id="3.10.310.40">
    <property type="match status" value="1"/>
</dbReference>
<dbReference type="Gene3D" id="3.30.54.20">
    <property type="match status" value="1"/>
</dbReference>
<dbReference type="Gene3D" id="6.10.250.550">
    <property type="match status" value="1"/>
</dbReference>
<dbReference type="Gene3D" id="3.30.930.10">
    <property type="entry name" value="Bira Bifunctional Protein, Domain 2"/>
    <property type="match status" value="1"/>
</dbReference>
<dbReference type="Gene3D" id="3.30.980.10">
    <property type="entry name" value="Threonyl-trna Synthetase, Chain A, domain 2"/>
    <property type="match status" value="1"/>
</dbReference>
<dbReference type="HAMAP" id="MF_00036_B">
    <property type="entry name" value="Ala_tRNA_synth_B"/>
    <property type="match status" value="1"/>
</dbReference>
<dbReference type="InterPro" id="IPR045864">
    <property type="entry name" value="aa-tRNA-synth_II/BPL/LPL"/>
</dbReference>
<dbReference type="InterPro" id="IPR002318">
    <property type="entry name" value="Ala-tRNA-lgiase_IIc"/>
</dbReference>
<dbReference type="InterPro" id="IPR018162">
    <property type="entry name" value="Ala-tRNA-ligase_IIc_anticod-bd"/>
</dbReference>
<dbReference type="InterPro" id="IPR018165">
    <property type="entry name" value="Ala-tRNA-synth_IIc_core"/>
</dbReference>
<dbReference type="InterPro" id="IPR018164">
    <property type="entry name" value="Ala-tRNA-synth_IIc_N"/>
</dbReference>
<dbReference type="InterPro" id="IPR050058">
    <property type="entry name" value="Ala-tRNA_ligase"/>
</dbReference>
<dbReference type="InterPro" id="IPR023033">
    <property type="entry name" value="Ala_tRNA_ligase_euk/bac"/>
</dbReference>
<dbReference type="InterPro" id="IPR003156">
    <property type="entry name" value="DHHA1_dom"/>
</dbReference>
<dbReference type="InterPro" id="IPR018163">
    <property type="entry name" value="Thr/Ala-tRNA-synth_IIc_edit"/>
</dbReference>
<dbReference type="InterPro" id="IPR009000">
    <property type="entry name" value="Transl_B-barrel_sf"/>
</dbReference>
<dbReference type="InterPro" id="IPR012947">
    <property type="entry name" value="tRNA_SAD"/>
</dbReference>
<dbReference type="NCBIfam" id="TIGR00344">
    <property type="entry name" value="alaS"/>
    <property type="match status" value="1"/>
</dbReference>
<dbReference type="PANTHER" id="PTHR11777:SF9">
    <property type="entry name" value="ALANINE--TRNA LIGASE, CYTOPLASMIC"/>
    <property type="match status" value="1"/>
</dbReference>
<dbReference type="PANTHER" id="PTHR11777">
    <property type="entry name" value="ALANYL-TRNA SYNTHETASE"/>
    <property type="match status" value="1"/>
</dbReference>
<dbReference type="Pfam" id="PF02272">
    <property type="entry name" value="DHHA1"/>
    <property type="match status" value="1"/>
</dbReference>
<dbReference type="Pfam" id="PF01411">
    <property type="entry name" value="tRNA-synt_2c"/>
    <property type="match status" value="1"/>
</dbReference>
<dbReference type="Pfam" id="PF07973">
    <property type="entry name" value="tRNA_SAD"/>
    <property type="match status" value="1"/>
</dbReference>
<dbReference type="PRINTS" id="PR00980">
    <property type="entry name" value="TRNASYNTHALA"/>
</dbReference>
<dbReference type="SMART" id="SM00863">
    <property type="entry name" value="tRNA_SAD"/>
    <property type="match status" value="1"/>
</dbReference>
<dbReference type="SUPFAM" id="SSF55681">
    <property type="entry name" value="Class II aaRS and biotin synthetases"/>
    <property type="match status" value="1"/>
</dbReference>
<dbReference type="SUPFAM" id="SSF101353">
    <property type="entry name" value="Putative anticodon-binding domain of alanyl-tRNA synthetase (AlaRS)"/>
    <property type="match status" value="1"/>
</dbReference>
<dbReference type="SUPFAM" id="SSF55186">
    <property type="entry name" value="ThrRS/AlaRS common domain"/>
    <property type="match status" value="1"/>
</dbReference>
<dbReference type="SUPFAM" id="SSF50447">
    <property type="entry name" value="Translation proteins"/>
    <property type="match status" value="1"/>
</dbReference>
<dbReference type="PROSITE" id="PS50860">
    <property type="entry name" value="AA_TRNA_LIGASE_II_ALA"/>
    <property type="match status" value="1"/>
</dbReference>
<protein>
    <recommendedName>
        <fullName evidence="1">Alanine--tRNA ligase</fullName>
        <ecNumber evidence="1">6.1.1.7</ecNumber>
    </recommendedName>
    <alternativeName>
        <fullName evidence="1">Alanyl-tRNA synthetase</fullName>
        <shortName evidence="1">AlaRS</shortName>
    </alternativeName>
</protein>
<feature type="chain" id="PRO_0000075132" description="Alanine--tRNA ligase">
    <location>
        <begin position="1"/>
        <end position="860"/>
    </location>
</feature>
<feature type="binding site" evidence="1">
    <location>
        <position position="553"/>
    </location>
    <ligand>
        <name>Zn(2+)</name>
        <dbReference type="ChEBI" id="CHEBI:29105"/>
    </ligand>
</feature>
<feature type="binding site" evidence="1">
    <location>
        <position position="557"/>
    </location>
    <ligand>
        <name>Zn(2+)</name>
        <dbReference type="ChEBI" id="CHEBI:29105"/>
    </ligand>
</feature>
<feature type="binding site" evidence="1">
    <location>
        <position position="655"/>
    </location>
    <ligand>
        <name>Zn(2+)</name>
        <dbReference type="ChEBI" id="CHEBI:29105"/>
    </ligand>
</feature>
<feature type="binding site" evidence="1">
    <location>
        <position position="659"/>
    </location>
    <ligand>
        <name>Zn(2+)</name>
        <dbReference type="ChEBI" id="CHEBI:29105"/>
    </ligand>
</feature>
<evidence type="ECO:0000255" key="1">
    <source>
        <dbReference type="HAMAP-Rule" id="MF_00036"/>
    </source>
</evidence>
<gene>
    <name evidence="1" type="primary">alaS</name>
    <name type="ordered locus">lpl1763</name>
</gene>
<proteinExistence type="inferred from homology"/>
<name>SYA_LEGPL</name>
<comment type="function">
    <text evidence="1">Catalyzes the attachment of alanine to tRNA(Ala) in a two-step reaction: alanine is first activated by ATP to form Ala-AMP and then transferred to the acceptor end of tRNA(Ala). Also edits incorrectly charged Ser-tRNA(Ala) and Gly-tRNA(Ala) via its editing domain.</text>
</comment>
<comment type="catalytic activity">
    <reaction evidence="1">
        <text>tRNA(Ala) + L-alanine + ATP = L-alanyl-tRNA(Ala) + AMP + diphosphate</text>
        <dbReference type="Rhea" id="RHEA:12540"/>
        <dbReference type="Rhea" id="RHEA-COMP:9657"/>
        <dbReference type="Rhea" id="RHEA-COMP:9923"/>
        <dbReference type="ChEBI" id="CHEBI:30616"/>
        <dbReference type="ChEBI" id="CHEBI:33019"/>
        <dbReference type="ChEBI" id="CHEBI:57972"/>
        <dbReference type="ChEBI" id="CHEBI:78442"/>
        <dbReference type="ChEBI" id="CHEBI:78497"/>
        <dbReference type="ChEBI" id="CHEBI:456215"/>
        <dbReference type="EC" id="6.1.1.7"/>
    </reaction>
</comment>
<comment type="cofactor">
    <cofactor evidence="1">
        <name>Zn(2+)</name>
        <dbReference type="ChEBI" id="CHEBI:29105"/>
    </cofactor>
    <text evidence="1">Binds 1 zinc ion per subunit.</text>
</comment>
<comment type="subcellular location">
    <subcellularLocation>
        <location evidence="1">Cytoplasm</location>
    </subcellularLocation>
</comment>
<comment type="domain">
    <text evidence="1">Consists of three domains; the N-terminal catalytic domain, the editing domain and the C-terminal C-Ala domain. The editing domain removes incorrectly charged amino acids, while the C-Ala domain, along with tRNA(Ala), serves as a bridge to cooperatively bring together the editing and aminoacylation centers thus stimulating deacylation of misacylated tRNAs.</text>
</comment>
<comment type="similarity">
    <text evidence="1">Belongs to the class-II aminoacyl-tRNA synthetase family.</text>
</comment>
<organism>
    <name type="scientific">Legionella pneumophila (strain Lens)</name>
    <dbReference type="NCBI Taxonomy" id="297245"/>
    <lineage>
        <taxon>Bacteria</taxon>
        <taxon>Pseudomonadati</taxon>
        <taxon>Pseudomonadota</taxon>
        <taxon>Gammaproteobacteria</taxon>
        <taxon>Legionellales</taxon>
        <taxon>Legionellaceae</taxon>
        <taxon>Legionella</taxon>
    </lineage>
</organism>
<reference key="1">
    <citation type="journal article" date="2004" name="Nat. Genet.">
        <title>Evidence in the Legionella pneumophila genome for exploitation of host cell functions and high genome plasticity.</title>
        <authorList>
            <person name="Cazalet C."/>
            <person name="Rusniok C."/>
            <person name="Brueggemann H."/>
            <person name="Zidane N."/>
            <person name="Magnier A."/>
            <person name="Ma L."/>
            <person name="Tichit M."/>
            <person name="Jarraud S."/>
            <person name="Bouchier C."/>
            <person name="Vandenesch F."/>
            <person name="Kunst F."/>
            <person name="Etienne J."/>
            <person name="Glaser P."/>
            <person name="Buchrieser C."/>
        </authorList>
    </citation>
    <scope>NUCLEOTIDE SEQUENCE [LARGE SCALE GENOMIC DNA]</scope>
    <source>
        <strain>Lens</strain>
    </source>
</reference>
<keyword id="KW-0030">Aminoacyl-tRNA synthetase</keyword>
<keyword id="KW-0067">ATP-binding</keyword>
<keyword id="KW-0963">Cytoplasm</keyword>
<keyword id="KW-0436">Ligase</keyword>
<keyword id="KW-0479">Metal-binding</keyword>
<keyword id="KW-0547">Nucleotide-binding</keyword>
<keyword id="KW-0648">Protein biosynthesis</keyword>
<keyword id="KW-0694">RNA-binding</keyword>
<keyword id="KW-0820">tRNA-binding</keyword>
<keyword id="KW-0862">Zinc</keyword>